<reference key="1">
    <citation type="journal article" date="1997" name="Eur. J. Biochem.">
        <title>Molecular characterisation of the pifC gene encoding translation initiation factor 3, which is required for normal photosynthetic complex formation in Rhodobacter sphaeroides NCIB 8253.</title>
        <authorList>
            <person name="Babic S."/>
            <person name="Hunter C.N."/>
            <person name="Rakhlin N.J."/>
            <person name="Simons R.W."/>
            <person name="Phillips-Jones M.K."/>
        </authorList>
    </citation>
    <scope>NUCLEOTIDE SEQUENCE [GENOMIC DNA]</scope>
</reference>
<reference key="2">
    <citation type="submission" date="2005-09" db="EMBL/GenBank/DDBJ databases">
        <title>Complete sequence of chromosome 1 of Rhodobacter sphaeroides 2.4.1.</title>
        <authorList>
            <person name="Copeland A."/>
            <person name="Lucas S."/>
            <person name="Lapidus A."/>
            <person name="Barry K."/>
            <person name="Detter J.C."/>
            <person name="Glavina T."/>
            <person name="Hammon N."/>
            <person name="Israni S."/>
            <person name="Pitluck S."/>
            <person name="Richardson P."/>
            <person name="Mackenzie C."/>
            <person name="Choudhary M."/>
            <person name="Larimer F."/>
            <person name="Hauser L.J."/>
            <person name="Land M."/>
            <person name="Donohue T.J."/>
            <person name="Kaplan S."/>
        </authorList>
    </citation>
    <scope>NUCLEOTIDE SEQUENCE [LARGE SCALE GENOMIC DNA]</scope>
    <source>
        <strain>ATCC 17023 / DSM 158 / JCM 6121 / CCUG 31486 / LMG 2827 / NBRC 12203 / NCIMB 8253 / ATH 2.4.1.</strain>
    </source>
</reference>
<accession>O33567</accession>
<accession>Q3J546</accession>
<dbReference type="EMBL" id="Y14733">
    <property type="protein sequence ID" value="CAA75028.1"/>
    <property type="molecule type" value="Genomic_DNA"/>
</dbReference>
<dbReference type="EMBL" id="CP000143">
    <property type="protein sequence ID" value="ABA78088.2"/>
    <property type="molecule type" value="Genomic_DNA"/>
</dbReference>
<dbReference type="RefSeq" id="WP_023003529.1">
    <property type="nucleotide sequence ID" value="NZ_CP030271.1"/>
</dbReference>
<dbReference type="RefSeq" id="YP_351989.2">
    <property type="nucleotide sequence ID" value="NC_007493.2"/>
</dbReference>
<dbReference type="SMR" id="O33567"/>
<dbReference type="STRING" id="272943.RSP_1937"/>
<dbReference type="EnsemblBacteria" id="ABA78088">
    <property type="protein sequence ID" value="ABA78088"/>
    <property type="gene ID" value="RSP_1937"/>
</dbReference>
<dbReference type="GeneID" id="3719247"/>
<dbReference type="KEGG" id="rsp:RSP_1937"/>
<dbReference type="PATRIC" id="fig|272943.9.peg.830"/>
<dbReference type="eggNOG" id="COG0290">
    <property type="taxonomic scope" value="Bacteria"/>
</dbReference>
<dbReference type="OrthoDB" id="9806014at2"/>
<dbReference type="Proteomes" id="UP000002703">
    <property type="component" value="Chromosome 1"/>
</dbReference>
<dbReference type="GO" id="GO:0005829">
    <property type="term" value="C:cytosol"/>
    <property type="evidence" value="ECO:0007669"/>
    <property type="project" value="TreeGrafter"/>
</dbReference>
<dbReference type="GO" id="GO:0016020">
    <property type="term" value="C:membrane"/>
    <property type="evidence" value="ECO:0007669"/>
    <property type="project" value="TreeGrafter"/>
</dbReference>
<dbReference type="GO" id="GO:0043022">
    <property type="term" value="F:ribosome binding"/>
    <property type="evidence" value="ECO:0007669"/>
    <property type="project" value="TreeGrafter"/>
</dbReference>
<dbReference type="GO" id="GO:0003743">
    <property type="term" value="F:translation initiation factor activity"/>
    <property type="evidence" value="ECO:0007669"/>
    <property type="project" value="UniProtKB-UniRule"/>
</dbReference>
<dbReference type="GO" id="GO:0032790">
    <property type="term" value="P:ribosome disassembly"/>
    <property type="evidence" value="ECO:0007669"/>
    <property type="project" value="TreeGrafter"/>
</dbReference>
<dbReference type="FunFam" id="3.10.20.80:FF:000001">
    <property type="entry name" value="Translation initiation factor IF-3"/>
    <property type="match status" value="1"/>
</dbReference>
<dbReference type="FunFam" id="3.30.110.10:FF:000001">
    <property type="entry name" value="Translation initiation factor IF-3"/>
    <property type="match status" value="1"/>
</dbReference>
<dbReference type="Gene3D" id="3.30.110.10">
    <property type="entry name" value="Translation initiation factor 3 (IF-3), C-terminal domain"/>
    <property type="match status" value="1"/>
</dbReference>
<dbReference type="Gene3D" id="3.10.20.80">
    <property type="entry name" value="Translation initiation factor 3 (IF-3), N-terminal domain"/>
    <property type="match status" value="1"/>
</dbReference>
<dbReference type="HAMAP" id="MF_00080">
    <property type="entry name" value="IF_3"/>
    <property type="match status" value="1"/>
</dbReference>
<dbReference type="InterPro" id="IPR036788">
    <property type="entry name" value="T_IF-3_C_sf"/>
</dbReference>
<dbReference type="InterPro" id="IPR036787">
    <property type="entry name" value="T_IF-3_N_sf"/>
</dbReference>
<dbReference type="InterPro" id="IPR019813">
    <property type="entry name" value="Translation_initiation_fac3_CS"/>
</dbReference>
<dbReference type="InterPro" id="IPR001288">
    <property type="entry name" value="Translation_initiation_fac_3"/>
</dbReference>
<dbReference type="InterPro" id="IPR019815">
    <property type="entry name" value="Translation_initiation_fac_3_C"/>
</dbReference>
<dbReference type="InterPro" id="IPR019814">
    <property type="entry name" value="Translation_initiation_fac_3_N"/>
</dbReference>
<dbReference type="NCBIfam" id="TIGR00168">
    <property type="entry name" value="infC"/>
    <property type="match status" value="1"/>
</dbReference>
<dbReference type="PANTHER" id="PTHR10938">
    <property type="entry name" value="TRANSLATION INITIATION FACTOR IF-3"/>
    <property type="match status" value="1"/>
</dbReference>
<dbReference type="PANTHER" id="PTHR10938:SF0">
    <property type="entry name" value="TRANSLATION INITIATION FACTOR IF-3, MITOCHONDRIAL"/>
    <property type="match status" value="1"/>
</dbReference>
<dbReference type="Pfam" id="PF00707">
    <property type="entry name" value="IF3_C"/>
    <property type="match status" value="1"/>
</dbReference>
<dbReference type="Pfam" id="PF05198">
    <property type="entry name" value="IF3_N"/>
    <property type="match status" value="1"/>
</dbReference>
<dbReference type="SUPFAM" id="SSF55200">
    <property type="entry name" value="Translation initiation factor IF3, C-terminal domain"/>
    <property type="match status" value="1"/>
</dbReference>
<dbReference type="SUPFAM" id="SSF54364">
    <property type="entry name" value="Translation initiation factor IF3, N-terminal domain"/>
    <property type="match status" value="1"/>
</dbReference>
<dbReference type="PROSITE" id="PS00938">
    <property type="entry name" value="IF3"/>
    <property type="match status" value="1"/>
</dbReference>
<protein>
    <recommendedName>
        <fullName evidence="1">Translation initiation factor IF-3</fullName>
    </recommendedName>
</protein>
<organism>
    <name type="scientific">Cereibacter sphaeroides (strain ATCC 17023 / DSM 158 / JCM 6121 / CCUG 31486 / LMG 2827 / NBRC 12203 / NCIMB 8253 / ATH 2.4.1.)</name>
    <name type="common">Rhodobacter sphaeroides</name>
    <dbReference type="NCBI Taxonomy" id="272943"/>
    <lineage>
        <taxon>Bacteria</taxon>
        <taxon>Pseudomonadati</taxon>
        <taxon>Pseudomonadota</taxon>
        <taxon>Alphaproteobacteria</taxon>
        <taxon>Rhodobacterales</taxon>
        <taxon>Paracoccaceae</taxon>
        <taxon>Cereibacter</taxon>
    </lineage>
</organism>
<gene>
    <name evidence="1" type="primary">infC</name>
    <name type="synonym">pifC</name>
    <name type="ordered locus">RHOS4_05200</name>
    <name type="ORF">RSP_1937</name>
</gene>
<evidence type="ECO:0000255" key="1">
    <source>
        <dbReference type="HAMAP-Rule" id="MF_00080"/>
    </source>
</evidence>
<sequence>MARRPHNAPPQRETGPRVNERIRCPEVRLIGANGENIGVVTPSRAMMMAEEAGLDLVEISPNAEPPVCKIMDFGKFKYEQQKREAEARKKQHIIEIKEIKFRPGTDTHDYDVKMRSVLKFLSEGDKVKVTLRFRGREMAHQELGLELLNRVAAHVSEAEAGKVEAMPKLEGRQMVMMIAPK</sequence>
<name>IF3_CERS4</name>
<proteinExistence type="inferred from homology"/>
<keyword id="KW-0963">Cytoplasm</keyword>
<keyword id="KW-0396">Initiation factor</keyword>
<keyword id="KW-0648">Protein biosynthesis</keyword>
<keyword id="KW-1185">Reference proteome</keyword>
<feature type="chain" id="PRO_0000177566" description="Translation initiation factor IF-3">
    <location>
        <begin position="1"/>
        <end position="181"/>
    </location>
</feature>
<comment type="function">
    <text>IF-3 binds to the 30S ribosomal subunit and shifts the equilibrium between 70S ribosomes and their 50S and 30S subunits in favor of the free subunits, thus enhancing the availability of 30S subunits on which protein synthesis initiation begins.</text>
</comment>
<comment type="subunit">
    <text evidence="1">Monomer.</text>
</comment>
<comment type="subcellular location">
    <subcellularLocation>
        <location>Cytoplasm</location>
    </subcellularLocation>
</comment>
<comment type="similarity">
    <text evidence="1">Belongs to the IF-3 family.</text>
</comment>